<comment type="function">
    <text evidence="1">Component of the ERMES/MDM complex, which serves as a molecular tether to connect the endoplasmic reticulum and mitochondria. Components of this complex are involved in the control of mitochondrial shape and protein biogenesis and may function in phospholipid exchange. MDM10 is involved in the late assembly steps of the general translocase of the mitochondrial outer membrane (TOM complex). Functions in the TOM40-specific route of the assembly of outer membrane beta-barrel proteins, including the association of TOM40 with the receptor TOM22 and small TOM proteins. Can associate with the SAM(core) complex as well as the MDM12-MMM1 complex, both involved in late steps of the major beta-barrel assembly pathway, that is responsible for biogenesis of all outer membrane beta-barrel proteins. May act as a switch that shuttles between both complexes and channels precursor proteins into the TOM40-specific pathway. Plays a role in mitochondrial morphology and in the inheritance of mitochondria.</text>
</comment>
<comment type="subunit">
    <text evidence="1">Component of the ER-mitochondria encounter structure (ERMES) or MDM complex, composed of MMM1, MDM10, MDM12 and MDM34. Associates with the mitochondrial outer membrane sorting assembly machinery SAM(core) complex.</text>
</comment>
<comment type="subcellular location">
    <subcellularLocation>
        <location evidence="1">Mitochondrion outer membrane</location>
        <topology evidence="1">Multi-pass membrane protein</topology>
    </subcellularLocation>
    <text evidence="1">The ERMES/MDM complex localizes to a few discrete foci (around 10 per single cell), that represent mitochondria-endoplasmic reticulum junctions. These foci are often found next to mtDNA nucleoids.</text>
</comment>
<comment type="domain">
    <text>Lacks alpha-helical transmembrane segments, suggesting that it resides in the membrane via beta-sheet conformations similar to those predicted for other outer membrane proteins and porin.</text>
</comment>
<comment type="similarity">
    <text evidence="1">Belongs to the MDM10 family.</text>
</comment>
<accession>Q4PEP6</accession>
<accession>A0A0D1CER6</accession>
<gene>
    <name evidence="1" type="primary">MDM10</name>
    <name type="ORF">UMAG_01417</name>
</gene>
<keyword id="KW-0472">Membrane</keyword>
<keyword id="KW-0496">Mitochondrion</keyword>
<keyword id="KW-1000">Mitochondrion outer membrane</keyword>
<keyword id="KW-1185">Reference proteome</keyword>
<keyword id="KW-0812">Transmembrane</keyword>
<keyword id="KW-1134">Transmembrane beta strand</keyword>
<proteinExistence type="inferred from homology"/>
<name>MDM10_MYCMD</name>
<sequence length="646" mass="68510">MHDFVSHILRQYFHATNWNEYNSYLHLTSCSSAILDFCVPTGLSLSISASPTPPFFTTYRLGALPNLRAGIGYIYASTDSKIDFGGSSKDVRLKEIIERFRIVEARAPAAFKSKEKEKEYYWLAGDRYPEQEALGDLGKKERGGGEYLVYGCMHVPSARLDALWTKRISPTWQLIVTAVSSPPRYPLNALQNAAIASRSAYSTGAKSTSSSMDRLDSSNPSLSSSTSLSNTGASTAATTAAAAAAAAAAQDTYGLGPPGSTNLQFTLQRDTGRWFTEYSYSIDDALWGFRVLHNFGTPADTASTTLAALSEGAVETSSSASYPQRNGSVLHTGSSSSSEDTEAGGGLRGRFSAGAEVFISTVEKSAGLSTGIRFSTLPDTPQQPLMIAPSFDSSPSPHQASTLASAPSQPPTVITATLNPMMGHLSTAYAARMARDVVVCSRFDFNVYSYESEWTMGAEYWLRKSGGGGGVESVEASDADVPAPMNRIGSTSSIGGLRGHDETRQARFQEEHAMSLREASEAVSQVDGNTGDGGTSVFGLLRDPPALAPSAPSPRATCANSTLSHLLSPITGVLKARISSTSDIRLLWQGRLSHCLVSLGVKADLSGTHGASYSVGGAPASPKMGIVKSIGLEVMYFSQAEDESVE</sequence>
<organism>
    <name type="scientific">Mycosarcoma maydis</name>
    <name type="common">Corn smut fungus</name>
    <name type="synonym">Ustilago maydis</name>
    <dbReference type="NCBI Taxonomy" id="5270"/>
    <lineage>
        <taxon>Eukaryota</taxon>
        <taxon>Fungi</taxon>
        <taxon>Dikarya</taxon>
        <taxon>Basidiomycota</taxon>
        <taxon>Ustilaginomycotina</taxon>
        <taxon>Ustilaginomycetes</taxon>
        <taxon>Ustilaginales</taxon>
        <taxon>Ustilaginaceae</taxon>
        <taxon>Mycosarcoma</taxon>
    </lineage>
</organism>
<evidence type="ECO:0000255" key="1">
    <source>
        <dbReference type="HAMAP-Rule" id="MF_03102"/>
    </source>
</evidence>
<evidence type="ECO:0000256" key="2">
    <source>
        <dbReference type="SAM" id="MobiDB-lite"/>
    </source>
</evidence>
<dbReference type="EMBL" id="CM003141">
    <property type="protein sequence ID" value="KIS71522.1"/>
    <property type="molecule type" value="Genomic_DNA"/>
</dbReference>
<dbReference type="RefSeq" id="XP_011387289.1">
    <property type="nucleotide sequence ID" value="XM_011388987.1"/>
</dbReference>
<dbReference type="FunCoup" id="Q4PEP6">
    <property type="interactions" value="42"/>
</dbReference>
<dbReference type="STRING" id="237631.Q4PEP6"/>
<dbReference type="TCDB" id="1.B.8.6.2">
    <property type="family name" value="the mitochondrial and plastid porin (mpp) family"/>
</dbReference>
<dbReference type="EnsemblFungi" id="KIS71522">
    <property type="protein sequence ID" value="KIS71522"/>
    <property type="gene ID" value="UMAG_01417"/>
</dbReference>
<dbReference type="GeneID" id="23562445"/>
<dbReference type="KEGG" id="uma:UMAG_01417"/>
<dbReference type="VEuPathDB" id="FungiDB:UMAG_01417"/>
<dbReference type="eggNOG" id="ENOG502QUN5">
    <property type="taxonomic scope" value="Eukaryota"/>
</dbReference>
<dbReference type="HOGENOM" id="CLU_026505_2_0_1"/>
<dbReference type="InParanoid" id="Q4PEP6"/>
<dbReference type="OMA" id="DALWGFR"/>
<dbReference type="OrthoDB" id="2103793at2759"/>
<dbReference type="Proteomes" id="UP000000561">
    <property type="component" value="Chromosome 2"/>
</dbReference>
<dbReference type="GO" id="GO:0032865">
    <property type="term" value="C:ERMES complex"/>
    <property type="evidence" value="ECO:0000318"/>
    <property type="project" value="GO_Central"/>
</dbReference>
<dbReference type="GO" id="GO:0001401">
    <property type="term" value="C:SAM complex"/>
    <property type="evidence" value="ECO:0000318"/>
    <property type="project" value="GO_Central"/>
</dbReference>
<dbReference type="GO" id="GO:0051654">
    <property type="term" value="P:establishment of mitochondrion localization"/>
    <property type="evidence" value="ECO:0000318"/>
    <property type="project" value="GO_Central"/>
</dbReference>
<dbReference type="GO" id="GO:0000002">
    <property type="term" value="P:mitochondrial genome maintenance"/>
    <property type="evidence" value="ECO:0007669"/>
    <property type="project" value="UniProtKB-UniRule"/>
</dbReference>
<dbReference type="GO" id="GO:0070096">
    <property type="term" value="P:mitochondrial outer membrane translocase complex assembly"/>
    <property type="evidence" value="ECO:0000318"/>
    <property type="project" value="GO_Central"/>
</dbReference>
<dbReference type="GO" id="GO:1990456">
    <property type="term" value="P:mitochondrion-endoplasmic reticulum membrane tethering"/>
    <property type="evidence" value="ECO:0000318"/>
    <property type="project" value="GO_Central"/>
</dbReference>
<dbReference type="GO" id="GO:0015914">
    <property type="term" value="P:phospholipid transport"/>
    <property type="evidence" value="ECO:0000318"/>
    <property type="project" value="GO_Central"/>
</dbReference>
<dbReference type="GO" id="GO:0045040">
    <property type="term" value="P:protein insertion into mitochondrial outer membrane"/>
    <property type="evidence" value="ECO:0000318"/>
    <property type="project" value="GO_Central"/>
</dbReference>
<dbReference type="HAMAP" id="MF_03102">
    <property type="entry name" value="Mdm10"/>
    <property type="match status" value="1"/>
</dbReference>
<dbReference type="InterPro" id="IPR027539">
    <property type="entry name" value="Mdm10"/>
</dbReference>
<dbReference type="PANTHER" id="PTHR28035">
    <property type="entry name" value="MITOCHONDRIAL DISTRIBUTION AND MORPHOLOGY PROTEIN 10"/>
    <property type="match status" value="1"/>
</dbReference>
<dbReference type="PANTHER" id="PTHR28035:SF1">
    <property type="entry name" value="MITOCHONDRIAL DISTRIBUTION AND MORPHOLOGY PROTEIN 10"/>
    <property type="match status" value="1"/>
</dbReference>
<dbReference type="Pfam" id="PF12519">
    <property type="entry name" value="MDM10"/>
    <property type="match status" value="2"/>
</dbReference>
<reference key="1">
    <citation type="journal article" date="2006" name="Nature">
        <title>Insights from the genome of the biotrophic fungal plant pathogen Ustilago maydis.</title>
        <authorList>
            <person name="Kaemper J."/>
            <person name="Kahmann R."/>
            <person name="Boelker M."/>
            <person name="Ma L.-J."/>
            <person name="Brefort T."/>
            <person name="Saville B.J."/>
            <person name="Banuett F."/>
            <person name="Kronstad J.W."/>
            <person name="Gold S.E."/>
            <person name="Mueller O."/>
            <person name="Perlin M.H."/>
            <person name="Woesten H.A.B."/>
            <person name="de Vries R."/>
            <person name="Ruiz-Herrera J."/>
            <person name="Reynaga-Pena C.G."/>
            <person name="Snetselaar K."/>
            <person name="McCann M."/>
            <person name="Perez-Martin J."/>
            <person name="Feldbruegge M."/>
            <person name="Basse C.W."/>
            <person name="Steinberg G."/>
            <person name="Ibeas J.I."/>
            <person name="Holloman W."/>
            <person name="Guzman P."/>
            <person name="Farman M.L."/>
            <person name="Stajich J.E."/>
            <person name="Sentandreu R."/>
            <person name="Gonzalez-Prieto J.M."/>
            <person name="Kennell J.C."/>
            <person name="Molina L."/>
            <person name="Schirawski J."/>
            <person name="Mendoza-Mendoza A."/>
            <person name="Greilinger D."/>
            <person name="Muench K."/>
            <person name="Roessel N."/>
            <person name="Scherer M."/>
            <person name="Vranes M."/>
            <person name="Ladendorf O."/>
            <person name="Vincon V."/>
            <person name="Fuchs U."/>
            <person name="Sandrock B."/>
            <person name="Meng S."/>
            <person name="Ho E.C.H."/>
            <person name="Cahill M.J."/>
            <person name="Boyce K.J."/>
            <person name="Klose J."/>
            <person name="Klosterman S.J."/>
            <person name="Deelstra H.J."/>
            <person name="Ortiz-Castellanos L."/>
            <person name="Li W."/>
            <person name="Sanchez-Alonso P."/>
            <person name="Schreier P.H."/>
            <person name="Haeuser-Hahn I."/>
            <person name="Vaupel M."/>
            <person name="Koopmann E."/>
            <person name="Friedrich G."/>
            <person name="Voss H."/>
            <person name="Schlueter T."/>
            <person name="Margolis J."/>
            <person name="Platt D."/>
            <person name="Swimmer C."/>
            <person name="Gnirke A."/>
            <person name="Chen F."/>
            <person name="Vysotskaia V."/>
            <person name="Mannhaupt G."/>
            <person name="Gueldener U."/>
            <person name="Muensterkoetter M."/>
            <person name="Haase D."/>
            <person name="Oesterheld M."/>
            <person name="Mewes H.-W."/>
            <person name="Mauceli E.W."/>
            <person name="DeCaprio D."/>
            <person name="Wade C.M."/>
            <person name="Butler J."/>
            <person name="Young S.K."/>
            <person name="Jaffe D.B."/>
            <person name="Calvo S.E."/>
            <person name="Nusbaum C."/>
            <person name="Galagan J.E."/>
            <person name="Birren B.W."/>
        </authorList>
    </citation>
    <scope>NUCLEOTIDE SEQUENCE [LARGE SCALE GENOMIC DNA]</scope>
    <source>
        <strain>DSM 14603 / FGSC 9021 / UM521</strain>
    </source>
</reference>
<reference key="2">
    <citation type="submission" date="2014-09" db="EMBL/GenBank/DDBJ databases">
        <authorList>
            <person name="Gueldener U."/>
            <person name="Muensterkoetter M."/>
            <person name="Walter M.C."/>
            <person name="Mannhaupt G."/>
            <person name="Kahmann R."/>
        </authorList>
    </citation>
    <scope>GENOME REANNOTATION</scope>
    <source>
        <strain>DSM 14603 / FGSC 9021 / UM521</strain>
    </source>
</reference>
<feature type="chain" id="PRO_0000384204" description="Mitochondrial distribution and morphology protein 10">
    <location>
        <begin position="1"/>
        <end position="646"/>
    </location>
</feature>
<feature type="region of interest" description="Disordered" evidence="2">
    <location>
        <begin position="206"/>
        <end position="230"/>
    </location>
</feature>
<feature type="region of interest" description="Disordered" evidence="2">
    <location>
        <begin position="315"/>
        <end position="347"/>
    </location>
</feature>
<feature type="compositionally biased region" description="Low complexity" evidence="2">
    <location>
        <begin position="207"/>
        <end position="230"/>
    </location>
</feature>
<feature type="compositionally biased region" description="Polar residues" evidence="2">
    <location>
        <begin position="315"/>
        <end position="333"/>
    </location>
</feature>
<protein>
    <recommendedName>
        <fullName evidence="1">Mitochondrial distribution and morphology protein 10</fullName>
    </recommendedName>
    <alternativeName>
        <fullName evidence="1">Mitochondrial inheritance component MDM10</fullName>
    </alternativeName>
</protein>